<accession>Q6GE73</accession>
<name>HSSR_STAAR</name>
<protein>
    <recommendedName>
        <fullName>Heme response regulator HssR</fullName>
    </recommendedName>
</protein>
<gene>
    <name type="primary">hssR</name>
    <name type="ordered locus">SAR2447</name>
</gene>
<proteinExistence type="inferred from homology"/>
<feature type="chain" id="PRO_0000331323" description="Heme response regulator HssR">
    <location>
        <begin position="1"/>
        <end position="224"/>
    </location>
</feature>
<feature type="domain" description="Response regulatory" evidence="2">
    <location>
        <begin position="3"/>
        <end position="116"/>
    </location>
</feature>
<feature type="DNA-binding region" description="OmpR/PhoB-type" evidence="3">
    <location>
        <begin position="124"/>
        <end position="222"/>
    </location>
</feature>
<feature type="modified residue" description="4-aspartylphosphate" evidence="2">
    <location>
        <position position="52"/>
    </location>
</feature>
<organism>
    <name type="scientific">Staphylococcus aureus (strain MRSA252)</name>
    <dbReference type="NCBI Taxonomy" id="282458"/>
    <lineage>
        <taxon>Bacteria</taxon>
        <taxon>Bacillati</taxon>
        <taxon>Bacillota</taxon>
        <taxon>Bacilli</taxon>
        <taxon>Bacillales</taxon>
        <taxon>Staphylococcaceae</taxon>
        <taxon>Staphylococcus</taxon>
    </lineage>
</organism>
<dbReference type="EMBL" id="BX571856">
    <property type="protein sequence ID" value="CAG41429.1"/>
    <property type="molecule type" value="Genomic_DNA"/>
</dbReference>
<dbReference type="RefSeq" id="WP_000249492.1">
    <property type="nucleotide sequence ID" value="NC_002952.2"/>
</dbReference>
<dbReference type="SMR" id="Q6GE73"/>
<dbReference type="KEGG" id="sar:SAR2447"/>
<dbReference type="HOGENOM" id="CLU_000445_30_3_9"/>
<dbReference type="Proteomes" id="UP000000596">
    <property type="component" value="Chromosome"/>
</dbReference>
<dbReference type="GO" id="GO:0005829">
    <property type="term" value="C:cytosol"/>
    <property type="evidence" value="ECO:0007669"/>
    <property type="project" value="TreeGrafter"/>
</dbReference>
<dbReference type="GO" id="GO:0032993">
    <property type="term" value="C:protein-DNA complex"/>
    <property type="evidence" value="ECO:0007669"/>
    <property type="project" value="TreeGrafter"/>
</dbReference>
<dbReference type="GO" id="GO:0000156">
    <property type="term" value="F:phosphorelay response regulator activity"/>
    <property type="evidence" value="ECO:0007669"/>
    <property type="project" value="TreeGrafter"/>
</dbReference>
<dbReference type="GO" id="GO:0000976">
    <property type="term" value="F:transcription cis-regulatory region binding"/>
    <property type="evidence" value="ECO:0007669"/>
    <property type="project" value="TreeGrafter"/>
</dbReference>
<dbReference type="GO" id="GO:0006355">
    <property type="term" value="P:regulation of DNA-templated transcription"/>
    <property type="evidence" value="ECO:0007669"/>
    <property type="project" value="InterPro"/>
</dbReference>
<dbReference type="CDD" id="cd17574">
    <property type="entry name" value="REC_OmpR"/>
    <property type="match status" value="1"/>
</dbReference>
<dbReference type="CDD" id="cd00383">
    <property type="entry name" value="trans_reg_C"/>
    <property type="match status" value="1"/>
</dbReference>
<dbReference type="FunFam" id="1.10.10.10:FF:000018">
    <property type="entry name" value="DNA-binding response regulator ResD"/>
    <property type="match status" value="1"/>
</dbReference>
<dbReference type="Gene3D" id="3.40.50.2300">
    <property type="match status" value="1"/>
</dbReference>
<dbReference type="Gene3D" id="6.10.250.690">
    <property type="match status" value="1"/>
</dbReference>
<dbReference type="Gene3D" id="1.10.10.10">
    <property type="entry name" value="Winged helix-like DNA-binding domain superfamily/Winged helix DNA-binding domain"/>
    <property type="match status" value="1"/>
</dbReference>
<dbReference type="InterPro" id="IPR011006">
    <property type="entry name" value="CheY-like_superfamily"/>
</dbReference>
<dbReference type="InterPro" id="IPR001867">
    <property type="entry name" value="OmpR/PhoB-type_DNA-bd"/>
</dbReference>
<dbReference type="InterPro" id="IPR001789">
    <property type="entry name" value="Sig_transdc_resp-reg_receiver"/>
</dbReference>
<dbReference type="InterPro" id="IPR039420">
    <property type="entry name" value="WalR-like"/>
</dbReference>
<dbReference type="InterPro" id="IPR036388">
    <property type="entry name" value="WH-like_DNA-bd_sf"/>
</dbReference>
<dbReference type="PANTHER" id="PTHR48111:SF49">
    <property type="entry name" value="HEME RESPONSE REGULATOR HSSR"/>
    <property type="match status" value="1"/>
</dbReference>
<dbReference type="PANTHER" id="PTHR48111">
    <property type="entry name" value="REGULATOR OF RPOS"/>
    <property type="match status" value="1"/>
</dbReference>
<dbReference type="Pfam" id="PF00072">
    <property type="entry name" value="Response_reg"/>
    <property type="match status" value="1"/>
</dbReference>
<dbReference type="Pfam" id="PF00486">
    <property type="entry name" value="Trans_reg_C"/>
    <property type="match status" value="1"/>
</dbReference>
<dbReference type="SMART" id="SM00448">
    <property type="entry name" value="REC"/>
    <property type="match status" value="1"/>
</dbReference>
<dbReference type="SMART" id="SM00862">
    <property type="entry name" value="Trans_reg_C"/>
    <property type="match status" value="1"/>
</dbReference>
<dbReference type="SUPFAM" id="SSF52172">
    <property type="entry name" value="CheY-like"/>
    <property type="match status" value="1"/>
</dbReference>
<dbReference type="PROSITE" id="PS51755">
    <property type="entry name" value="OMPR_PHOB"/>
    <property type="match status" value="1"/>
</dbReference>
<dbReference type="PROSITE" id="PS50110">
    <property type="entry name" value="RESPONSE_REGULATORY"/>
    <property type="match status" value="1"/>
</dbReference>
<evidence type="ECO:0000250" key="1"/>
<evidence type="ECO:0000255" key="2">
    <source>
        <dbReference type="PROSITE-ProRule" id="PRU00169"/>
    </source>
</evidence>
<evidence type="ECO:0000255" key="3">
    <source>
        <dbReference type="PROSITE-ProRule" id="PRU01091"/>
    </source>
</evidence>
<evidence type="ECO:0000305" key="4"/>
<comment type="function">
    <text evidence="1">Member of the two-component regulatory system HssS/HssR involved in intracellular heme homeostasis and tempering of staphylococcal virulence. Phosphorylated HssR binds to a direct repeat sequence within hrtAB promoter and activates the expression of hrtAB, an efflux pump, in response to extracellular heme, hemin, hemoglobin or blood (By similarity).</text>
</comment>
<comment type="subcellular location">
    <subcellularLocation>
        <location evidence="4">Cytoplasm</location>
    </subcellularLocation>
</comment>
<comment type="PTM">
    <text evidence="1">Phosphorylated by HssS.</text>
</comment>
<sequence length="224" mass="25930">MVQCLVVDDDPRILNYIASHLQTEHIDAFTQPSGEAALKLLEKQRVDIAVVDIMMDGMDGFQLCNTLKNDYDIPVIMLTARDALSDKERAFISGTDDYVTKPFEVKELIFRIRAVLRRYNINSNSEMTIGNLTLNQSYLELQVSNKTMTLPNKEFQLLFMLAARPKQIFTREQIIEKIWGYDYEGDERTVDVHIKRLRQRLKKLNATLTIETVRGQGYKVENHV</sequence>
<reference key="1">
    <citation type="journal article" date="2004" name="Proc. Natl. Acad. Sci. U.S.A.">
        <title>Complete genomes of two clinical Staphylococcus aureus strains: evidence for the rapid evolution of virulence and drug resistance.</title>
        <authorList>
            <person name="Holden M.T.G."/>
            <person name="Feil E.J."/>
            <person name="Lindsay J.A."/>
            <person name="Peacock S.J."/>
            <person name="Day N.P.J."/>
            <person name="Enright M.C."/>
            <person name="Foster T.J."/>
            <person name="Moore C.E."/>
            <person name="Hurst L."/>
            <person name="Atkin R."/>
            <person name="Barron A."/>
            <person name="Bason N."/>
            <person name="Bentley S.D."/>
            <person name="Chillingworth C."/>
            <person name="Chillingworth T."/>
            <person name="Churcher C."/>
            <person name="Clark L."/>
            <person name="Corton C."/>
            <person name="Cronin A."/>
            <person name="Doggett J."/>
            <person name="Dowd L."/>
            <person name="Feltwell T."/>
            <person name="Hance Z."/>
            <person name="Harris B."/>
            <person name="Hauser H."/>
            <person name="Holroyd S."/>
            <person name="Jagels K."/>
            <person name="James K.D."/>
            <person name="Lennard N."/>
            <person name="Line A."/>
            <person name="Mayes R."/>
            <person name="Moule S."/>
            <person name="Mungall K."/>
            <person name="Ormond D."/>
            <person name="Quail M.A."/>
            <person name="Rabbinowitsch E."/>
            <person name="Rutherford K.M."/>
            <person name="Sanders M."/>
            <person name="Sharp S."/>
            <person name="Simmonds M."/>
            <person name="Stevens K."/>
            <person name="Whitehead S."/>
            <person name="Barrell B.G."/>
            <person name="Spratt B.G."/>
            <person name="Parkhill J."/>
        </authorList>
    </citation>
    <scope>NUCLEOTIDE SEQUENCE [LARGE SCALE GENOMIC DNA]</scope>
    <source>
        <strain>MRSA252</strain>
    </source>
</reference>
<keyword id="KW-0010">Activator</keyword>
<keyword id="KW-0963">Cytoplasm</keyword>
<keyword id="KW-0238">DNA-binding</keyword>
<keyword id="KW-0597">Phosphoprotein</keyword>
<keyword id="KW-0804">Transcription</keyword>
<keyword id="KW-0805">Transcription regulation</keyword>
<keyword id="KW-0902">Two-component regulatory system</keyword>
<keyword id="KW-0843">Virulence</keyword>